<keyword id="KW-0175">Coiled coil</keyword>
<keyword id="KW-0963">Cytoplasm</keyword>
<keyword id="KW-0880">Kelch repeat</keyword>
<keyword id="KW-0446">Lipid-binding</keyword>
<keyword id="KW-0597">Phosphoprotein</keyword>
<keyword id="KW-1185">Reference proteome</keyword>
<keyword id="KW-0677">Repeat</keyword>
<keyword id="KW-0813">Transport</keyword>
<name>ACBP5_ARATH</name>
<proteinExistence type="evidence at protein level"/>
<organism>
    <name type="scientific">Arabidopsis thaliana</name>
    <name type="common">Mouse-ear cress</name>
    <dbReference type="NCBI Taxonomy" id="3702"/>
    <lineage>
        <taxon>Eukaryota</taxon>
        <taxon>Viridiplantae</taxon>
        <taxon>Streptophyta</taxon>
        <taxon>Embryophyta</taxon>
        <taxon>Tracheophyta</taxon>
        <taxon>Spermatophyta</taxon>
        <taxon>Magnoliopsida</taxon>
        <taxon>eudicotyledons</taxon>
        <taxon>Gunneridae</taxon>
        <taxon>Pentapetalae</taxon>
        <taxon>rosids</taxon>
        <taxon>malvids</taxon>
        <taxon>Brassicales</taxon>
        <taxon>Brassicaceae</taxon>
        <taxon>Camelineae</taxon>
        <taxon>Arabidopsis</taxon>
    </lineage>
</organism>
<accession>Q8RWD9</accession>
<comment type="function">
    <text evidence="1 7">Binds medium- and long-chain acyl-CoA esters with very high affinity. Can interact in vitro with oleoyl-CoA, barely with palmitoyl-CoA, but not with arachidonyl-CoA. May function as an intracellular carrier of acyl-CoA esters (By similarity).</text>
</comment>
<comment type="interaction">
    <interactant intactId="EBI-4428122">
        <id>Q8RWD9</id>
    </interactant>
    <interactant intactId="EBI-2009699">
        <id>Q9MA55</id>
        <label>ACBP4</label>
    </interactant>
    <organismsDiffer>false</organismsDiffer>
    <experiments>5</experiments>
</comment>
<comment type="subcellular location">
    <subcellularLocation>
        <location evidence="8">Cytoplasm</location>
    </subcellularLocation>
</comment>
<comment type="tissue specificity">
    <text evidence="7">Expressed in roots, stems, leaves, flowers and siliques.</text>
</comment>
<comment type="induction">
    <text>Up-regulated in the light and down-regulated in constant darkness.</text>
</comment>
<comment type="similarity">
    <text evidence="9">Belongs to the ACBP family.</text>
</comment>
<dbReference type="EMBL" id="AC007478">
    <property type="status" value="NOT_ANNOTATED_CDS"/>
    <property type="molecule type" value="Genomic_DNA"/>
</dbReference>
<dbReference type="EMBL" id="CP002688">
    <property type="protein sequence ID" value="AED93708.1"/>
    <property type="molecule type" value="Genomic_DNA"/>
</dbReference>
<dbReference type="EMBL" id="AY093156">
    <property type="protein sequence ID" value="AAM13155.1"/>
    <property type="molecule type" value="mRNA"/>
</dbReference>
<dbReference type="EMBL" id="BT008399">
    <property type="protein sequence ID" value="AAP37758.1"/>
    <property type="molecule type" value="mRNA"/>
</dbReference>
<dbReference type="RefSeq" id="NP_198115.2">
    <property type="nucleotide sequence ID" value="NM_122645.5"/>
</dbReference>
<dbReference type="SMR" id="Q8RWD9"/>
<dbReference type="BioGRID" id="18099">
    <property type="interactions" value="4"/>
</dbReference>
<dbReference type="FunCoup" id="Q8RWD9">
    <property type="interactions" value="1632"/>
</dbReference>
<dbReference type="IntAct" id="Q8RWD9">
    <property type="interactions" value="4"/>
</dbReference>
<dbReference type="STRING" id="3702.Q8RWD9"/>
<dbReference type="GlyGen" id="Q8RWD9">
    <property type="glycosylation" value="2 sites"/>
</dbReference>
<dbReference type="iPTMnet" id="Q8RWD9"/>
<dbReference type="PaxDb" id="3702-AT5G27630.1"/>
<dbReference type="ProteomicsDB" id="244520"/>
<dbReference type="EnsemblPlants" id="AT5G27630.1">
    <property type="protein sequence ID" value="AT5G27630.1"/>
    <property type="gene ID" value="AT5G27630"/>
</dbReference>
<dbReference type="GeneID" id="832825"/>
<dbReference type="Gramene" id="AT5G27630.1">
    <property type="protein sequence ID" value="AT5G27630.1"/>
    <property type="gene ID" value="AT5G27630"/>
</dbReference>
<dbReference type="KEGG" id="ath:AT5G27630"/>
<dbReference type="Araport" id="AT5G27630"/>
<dbReference type="TAIR" id="AT5G27630">
    <property type="gene designation" value="ACBP5"/>
</dbReference>
<dbReference type="eggNOG" id="KOG0379">
    <property type="taxonomic scope" value="Eukaryota"/>
</dbReference>
<dbReference type="eggNOG" id="KOG0817">
    <property type="taxonomic scope" value="Eukaryota"/>
</dbReference>
<dbReference type="HOGENOM" id="CLU_012752_2_0_1"/>
<dbReference type="InParanoid" id="Q8RWD9"/>
<dbReference type="PhylomeDB" id="Q8RWD9"/>
<dbReference type="PRO" id="PR:Q8RWD9"/>
<dbReference type="Proteomes" id="UP000006548">
    <property type="component" value="Chromosome 5"/>
</dbReference>
<dbReference type="ExpressionAtlas" id="Q8RWD9">
    <property type="expression patterns" value="baseline and differential"/>
</dbReference>
<dbReference type="GO" id="GO:0005829">
    <property type="term" value="C:cytosol"/>
    <property type="evidence" value="ECO:0000314"/>
    <property type="project" value="TAIR"/>
</dbReference>
<dbReference type="GO" id="GO:0000062">
    <property type="term" value="F:fatty-acyl-CoA binding"/>
    <property type="evidence" value="ECO:0000314"/>
    <property type="project" value="TAIR"/>
</dbReference>
<dbReference type="GO" id="GO:0006869">
    <property type="term" value="P:lipid transport"/>
    <property type="evidence" value="ECO:0000314"/>
    <property type="project" value="TAIR"/>
</dbReference>
<dbReference type="GO" id="GO:0001666">
    <property type="term" value="P:response to hypoxia"/>
    <property type="evidence" value="ECO:0000270"/>
    <property type="project" value="TAIR"/>
</dbReference>
<dbReference type="GO" id="GO:0009416">
    <property type="term" value="P:response to light stimulus"/>
    <property type="evidence" value="ECO:0000304"/>
    <property type="project" value="UniProtKB"/>
</dbReference>
<dbReference type="FunFam" id="2.120.10.80:FF:000089">
    <property type="entry name" value="Acyl-CoA-binding domain-containing protein 4"/>
    <property type="match status" value="1"/>
</dbReference>
<dbReference type="FunFam" id="2.120.10.80:FF:000098">
    <property type="entry name" value="Acyl-CoA-binding domain-containing protein 4"/>
    <property type="match status" value="1"/>
</dbReference>
<dbReference type="FunFam" id="1.20.80.10:FF:000024">
    <property type="entry name" value="acyl-CoA-binding domain-containing protein 4 isoform X1"/>
    <property type="match status" value="1"/>
</dbReference>
<dbReference type="Gene3D" id="1.20.80.10">
    <property type="match status" value="1"/>
</dbReference>
<dbReference type="Gene3D" id="2.120.10.80">
    <property type="entry name" value="Kelch-type beta propeller"/>
    <property type="match status" value="2"/>
</dbReference>
<dbReference type="InterPro" id="IPR056819">
    <property type="entry name" value="ACBP4-6_C"/>
</dbReference>
<dbReference type="InterPro" id="IPR000582">
    <property type="entry name" value="Acyl-CoA-binding_protein"/>
</dbReference>
<dbReference type="InterPro" id="IPR035984">
    <property type="entry name" value="Acyl-CoA-binding_sf"/>
</dbReference>
<dbReference type="InterPro" id="IPR014352">
    <property type="entry name" value="FERM/acyl-CoA-bd_prot_sf"/>
</dbReference>
<dbReference type="InterPro" id="IPR015915">
    <property type="entry name" value="Kelch-typ_b-propeller"/>
</dbReference>
<dbReference type="InterPro" id="IPR006652">
    <property type="entry name" value="Kelch_1"/>
</dbReference>
<dbReference type="PANTHER" id="PTHR46093">
    <property type="entry name" value="ACYL-COA-BINDING DOMAIN-CONTAINING PROTEIN 5"/>
    <property type="match status" value="1"/>
</dbReference>
<dbReference type="PANTHER" id="PTHR46093:SF12">
    <property type="entry name" value="ACYL-COA-BINDING DOMAIN-CONTAINING PROTEIN 5"/>
    <property type="match status" value="1"/>
</dbReference>
<dbReference type="Pfam" id="PF00887">
    <property type="entry name" value="ACBP"/>
    <property type="match status" value="1"/>
</dbReference>
<dbReference type="Pfam" id="PF24922">
    <property type="entry name" value="ACBP4_C"/>
    <property type="match status" value="1"/>
</dbReference>
<dbReference type="Pfam" id="PF24681">
    <property type="entry name" value="Kelch_KLHDC2_KLHL20_DRC7"/>
    <property type="match status" value="2"/>
</dbReference>
<dbReference type="SMART" id="SM00612">
    <property type="entry name" value="Kelch"/>
    <property type="match status" value="2"/>
</dbReference>
<dbReference type="SUPFAM" id="SSF47027">
    <property type="entry name" value="Acyl-CoA binding protein"/>
    <property type="match status" value="1"/>
</dbReference>
<dbReference type="SUPFAM" id="SSF117281">
    <property type="entry name" value="Kelch motif"/>
    <property type="match status" value="1"/>
</dbReference>
<dbReference type="PROSITE" id="PS51228">
    <property type="entry name" value="ACB_2"/>
    <property type="match status" value="1"/>
</dbReference>
<reference key="1">
    <citation type="journal article" date="2000" name="Nature">
        <title>Sequence and analysis of chromosome 5 of the plant Arabidopsis thaliana.</title>
        <authorList>
            <person name="Tabata S."/>
            <person name="Kaneko T."/>
            <person name="Nakamura Y."/>
            <person name="Kotani H."/>
            <person name="Kato T."/>
            <person name="Asamizu E."/>
            <person name="Miyajima N."/>
            <person name="Sasamoto S."/>
            <person name="Kimura T."/>
            <person name="Hosouchi T."/>
            <person name="Kawashima K."/>
            <person name="Kohara M."/>
            <person name="Matsumoto M."/>
            <person name="Matsuno A."/>
            <person name="Muraki A."/>
            <person name="Nakayama S."/>
            <person name="Nakazaki N."/>
            <person name="Naruo K."/>
            <person name="Okumura S."/>
            <person name="Shinpo S."/>
            <person name="Takeuchi C."/>
            <person name="Wada T."/>
            <person name="Watanabe A."/>
            <person name="Yamada M."/>
            <person name="Yasuda M."/>
            <person name="Sato S."/>
            <person name="de la Bastide M."/>
            <person name="Huang E."/>
            <person name="Spiegel L."/>
            <person name="Gnoj L."/>
            <person name="O'Shaughnessy A."/>
            <person name="Preston R."/>
            <person name="Habermann K."/>
            <person name="Murray J."/>
            <person name="Johnson D."/>
            <person name="Rohlfing T."/>
            <person name="Nelson J."/>
            <person name="Stoneking T."/>
            <person name="Pepin K."/>
            <person name="Spieth J."/>
            <person name="Sekhon M."/>
            <person name="Armstrong J."/>
            <person name="Becker M."/>
            <person name="Belter E."/>
            <person name="Cordum H."/>
            <person name="Cordes M."/>
            <person name="Courtney L."/>
            <person name="Courtney W."/>
            <person name="Dante M."/>
            <person name="Du H."/>
            <person name="Edwards J."/>
            <person name="Fryman J."/>
            <person name="Haakensen B."/>
            <person name="Lamar E."/>
            <person name="Latreille P."/>
            <person name="Leonard S."/>
            <person name="Meyer R."/>
            <person name="Mulvaney E."/>
            <person name="Ozersky P."/>
            <person name="Riley A."/>
            <person name="Strowmatt C."/>
            <person name="Wagner-McPherson C."/>
            <person name="Wollam A."/>
            <person name="Yoakum M."/>
            <person name="Bell M."/>
            <person name="Dedhia N."/>
            <person name="Parnell L."/>
            <person name="Shah R."/>
            <person name="Rodriguez M."/>
            <person name="Hoon See L."/>
            <person name="Vil D."/>
            <person name="Baker J."/>
            <person name="Kirchoff K."/>
            <person name="Toth K."/>
            <person name="King L."/>
            <person name="Bahret A."/>
            <person name="Miller B."/>
            <person name="Marra M.A."/>
            <person name="Martienssen R."/>
            <person name="McCombie W.R."/>
            <person name="Wilson R.K."/>
            <person name="Murphy G."/>
            <person name="Bancroft I."/>
            <person name="Volckaert G."/>
            <person name="Wambutt R."/>
            <person name="Duesterhoeft A."/>
            <person name="Stiekema W."/>
            <person name="Pohl T."/>
            <person name="Entian K.-D."/>
            <person name="Terryn N."/>
            <person name="Hartley N."/>
            <person name="Bent E."/>
            <person name="Johnson S."/>
            <person name="Langham S.-A."/>
            <person name="McCullagh B."/>
            <person name="Robben J."/>
            <person name="Grymonprez B."/>
            <person name="Zimmermann W."/>
            <person name="Ramsperger U."/>
            <person name="Wedler H."/>
            <person name="Balke K."/>
            <person name="Wedler E."/>
            <person name="Peters S."/>
            <person name="van Staveren M."/>
            <person name="Dirkse W."/>
            <person name="Mooijman P."/>
            <person name="Klein Lankhorst R."/>
            <person name="Weitzenegger T."/>
            <person name="Bothe G."/>
            <person name="Rose M."/>
            <person name="Hauf J."/>
            <person name="Berneiser S."/>
            <person name="Hempel S."/>
            <person name="Feldpausch M."/>
            <person name="Lamberth S."/>
            <person name="Villarroel R."/>
            <person name="Gielen J."/>
            <person name="Ardiles W."/>
            <person name="Bents O."/>
            <person name="Lemcke K."/>
            <person name="Kolesov G."/>
            <person name="Mayer K.F.X."/>
            <person name="Rudd S."/>
            <person name="Schoof H."/>
            <person name="Schueller C."/>
            <person name="Zaccaria P."/>
            <person name="Mewes H.-W."/>
            <person name="Bevan M."/>
            <person name="Fransz P.F."/>
        </authorList>
    </citation>
    <scope>NUCLEOTIDE SEQUENCE [LARGE SCALE GENOMIC DNA]</scope>
    <source>
        <strain>cv. Columbia</strain>
    </source>
</reference>
<reference key="2">
    <citation type="journal article" date="2017" name="Plant J.">
        <title>Araport11: a complete reannotation of the Arabidopsis thaliana reference genome.</title>
        <authorList>
            <person name="Cheng C.Y."/>
            <person name="Krishnakumar V."/>
            <person name="Chan A.P."/>
            <person name="Thibaud-Nissen F."/>
            <person name="Schobel S."/>
            <person name="Town C.D."/>
        </authorList>
    </citation>
    <scope>GENOME REANNOTATION</scope>
    <source>
        <strain>cv. Columbia</strain>
    </source>
</reference>
<reference key="3">
    <citation type="journal article" date="2003" name="Science">
        <title>Empirical analysis of transcriptional activity in the Arabidopsis genome.</title>
        <authorList>
            <person name="Yamada K."/>
            <person name="Lim J."/>
            <person name="Dale J.M."/>
            <person name="Chen H."/>
            <person name="Shinn P."/>
            <person name="Palm C.J."/>
            <person name="Southwick A.M."/>
            <person name="Wu H.C."/>
            <person name="Kim C.J."/>
            <person name="Nguyen M."/>
            <person name="Pham P.K."/>
            <person name="Cheuk R.F."/>
            <person name="Karlin-Newmann G."/>
            <person name="Liu S.X."/>
            <person name="Lam B."/>
            <person name="Sakano H."/>
            <person name="Wu T."/>
            <person name="Yu G."/>
            <person name="Miranda M."/>
            <person name="Quach H.L."/>
            <person name="Tripp M."/>
            <person name="Chang C.H."/>
            <person name="Lee J.M."/>
            <person name="Toriumi M.J."/>
            <person name="Chan M.M."/>
            <person name="Tang C.C."/>
            <person name="Onodera C.S."/>
            <person name="Deng J.M."/>
            <person name="Akiyama K."/>
            <person name="Ansari Y."/>
            <person name="Arakawa T."/>
            <person name="Banh J."/>
            <person name="Banno F."/>
            <person name="Bowser L."/>
            <person name="Brooks S.Y."/>
            <person name="Carninci P."/>
            <person name="Chao Q."/>
            <person name="Choy N."/>
            <person name="Enju A."/>
            <person name="Goldsmith A.D."/>
            <person name="Gurjal M."/>
            <person name="Hansen N.F."/>
            <person name="Hayashizaki Y."/>
            <person name="Johnson-Hopson C."/>
            <person name="Hsuan V.W."/>
            <person name="Iida K."/>
            <person name="Karnes M."/>
            <person name="Khan S."/>
            <person name="Koesema E."/>
            <person name="Ishida J."/>
            <person name="Jiang P.X."/>
            <person name="Jones T."/>
            <person name="Kawai J."/>
            <person name="Kamiya A."/>
            <person name="Meyers C."/>
            <person name="Nakajima M."/>
            <person name="Narusaka M."/>
            <person name="Seki M."/>
            <person name="Sakurai T."/>
            <person name="Satou M."/>
            <person name="Tamse R."/>
            <person name="Vaysberg M."/>
            <person name="Wallender E.K."/>
            <person name="Wong C."/>
            <person name="Yamamura Y."/>
            <person name="Yuan S."/>
            <person name="Shinozaki K."/>
            <person name="Davis R.W."/>
            <person name="Theologis A."/>
            <person name="Ecker J.R."/>
        </authorList>
    </citation>
    <scope>NUCLEOTIDE SEQUENCE [LARGE SCALE MRNA]</scope>
    <source>
        <strain>cv. Columbia</strain>
    </source>
</reference>
<reference key="4">
    <citation type="journal article" date="2004" name="Plant Mol. Biol.">
        <title>ACBP4 and ACBP5, novel Arabidopsis acyl-CoA-binding proteins with kelch motifs that bind oleoyl-CoA.</title>
        <authorList>
            <person name="Leung K.-C."/>
            <person name="Li H.-Y."/>
            <person name="Mishra G."/>
            <person name="Chye M.-L."/>
        </authorList>
    </citation>
    <scope>FUNCTION</scope>
    <scope>MUTAGENESIS OF GLY-25; LEU-26; SER-29; LEU-46; TYR-49; GLN-53; LYS-75 AND PHE-94</scope>
    <scope>TISSUE SPECIFICITY</scope>
</reference>
<reference key="5">
    <citation type="journal article" date="2008" name="Plant Mol. Biol.">
        <title>Arabidopsis acyl-CoA-binding proteins ACBP4 and ACBP5 are subcellularly localized to the cytosol and ACBP4 depletion affects membrane lipid composition.</title>
        <authorList>
            <person name="Xiao S."/>
            <person name="Li H.-Y."/>
            <person name="Zhang J.-P."/>
            <person name="Chan S.-W."/>
            <person name="Chye M.-L."/>
        </authorList>
    </citation>
    <scope>SUBCELLULAR LOCATION</scope>
</reference>
<reference key="6">
    <citation type="journal article" date="2009" name="Plant Physiol. Biochem.">
        <title>An Arabidopsis family of six acyl-CoA-binding proteins has three cytosolic members.</title>
        <authorList>
            <person name="Xiao S."/>
            <person name="Chye M.-L."/>
        </authorList>
    </citation>
    <scope>GENE FAMILY</scope>
    <scope>NOMENCLATURE</scope>
</reference>
<sequence length="648" mass="71009">MAHMVRASSGLSYPERFYAAASYVGLDGSQSSVKQLSSKFSNDTSLLLYTLHQQATLGPCSIPKPSAWNPVEQSKWKSWQGLGTMPSIEAMRLFVKILEEADPGWYPRTSNSVLDPAVHVQINSTKAEPSFESGASFGETKTITSEDGRLTETQDKDVVLEDPDTVSVYNQWTAPRTSGQPPKARYQHGAAVIQDKMYMYGGNHNGRYLGDLHVLDLKNWTWSRVETKVVTGSQETSSPAKLTHCAGHSLIPWDNQLLSIGGHTKDPSESMPVMVFDLHCCSWSILKTYGKPPISRGGQSVTLVGKSLVIFGGQDAKRSLLNDLHILDLDTMTWEEIDAVGSPPTPRSDHAAAVHAERYLLIFGGGSHATCFDDLHVLDLQTMEWSRHTQQGDAPTPRAGHAGVTIGENWYIVGGGDNKSGASKTVVLNMSTLAWSVVTSVQEHVPLASEGLSLVVSSYNGEDIVVAFGGYNGHYNNEVNVLKPSHKSSLKSKIMGASAVPDSFSAVNNATTRDIESEIKVEGKADRIITTLKSEKEEVEASLNKEKIQTLQLKEELAEIDTRNTELYKELQSVRNQLAAEQSRCFKLEVEVAELRQKLQTMETLQKELELLQRQRAVASEQAATMNAKRQSSGGVWGWLAGTPPPKT</sequence>
<feature type="chain" id="PRO_0000379904" description="Acyl-CoA-binding domain-containing protein 5">
    <location>
        <begin position="1"/>
        <end position="648"/>
    </location>
</feature>
<feature type="domain" description="ACB" evidence="5">
    <location>
        <begin position="13"/>
        <end position="107"/>
    </location>
</feature>
<feature type="repeat" description="Kelch 1">
    <location>
        <begin position="196"/>
        <end position="244"/>
    </location>
</feature>
<feature type="repeat" description="Kelch 2">
    <location>
        <begin position="256"/>
        <end position="306"/>
    </location>
</feature>
<feature type="repeat" description="Kelch 3">
    <location>
        <begin position="307"/>
        <end position="357"/>
    </location>
</feature>
<feature type="repeat" description="Kelch 4">
    <location>
        <begin position="359"/>
        <end position="408"/>
    </location>
</feature>
<feature type="repeat" description="Kelch 5">
    <location>
        <begin position="409"/>
        <end position="457"/>
    </location>
</feature>
<feature type="repeat" description="Kelch 6">
    <location>
        <begin position="464"/>
        <end position="509"/>
    </location>
</feature>
<feature type="region of interest" description="Disordered" evidence="6">
    <location>
        <begin position="625"/>
        <end position="648"/>
    </location>
</feature>
<feature type="coiled-coil region" evidence="4">
    <location>
        <begin position="520"/>
        <end position="632"/>
    </location>
</feature>
<feature type="compositionally biased region" description="Polar residues" evidence="6">
    <location>
        <begin position="625"/>
        <end position="634"/>
    </location>
</feature>
<feature type="binding site" evidence="2">
    <location>
        <position position="34"/>
    </location>
    <ligand>
        <name>an acyl-CoA</name>
        <dbReference type="ChEBI" id="CHEBI:58342"/>
    </ligand>
</feature>
<feature type="binding site" evidence="9">
    <location>
        <begin position="49"/>
        <end position="53"/>
    </location>
    <ligand>
        <name>an acyl-CoA</name>
        <dbReference type="ChEBI" id="CHEBI:58342"/>
    </ligand>
</feature>
<feature type="binding site" evidence="2">
    <location>
        <position position="75"/>
    </location>
    <ligand>
        <name>an acyl-CoA</name>
        <dbReference type="ChEBI" id="CHEBI:58342"/>
    </ligand>
</feature>
<feature type="modified residue" description="Phosphoserine" evidence="3">
    <location>
        <position position="517"/>
    </location>
</feature>
<feature type="mutagenesis site" description="Reduction of oleoyl-CoA-binding activity." evidence="7">
    <original>G</original>
    <variation>T</variation>
    <location>
        <position position="25"/>
    </location>
</feature>
<feature type="mutagenesis site" description="Reduction of oleoyl-CoA-binding activity." evidence="7">
    <original>L</original>
    <variation>T</variation>
    <location>
        <position position="26"/>
    </location>
</feature>
<feature type="mutagenesis site" description="Reduction of oleoyl-CoA-binding activity." evidence="7">
    <original>S</original>
    <variation>A</variation>
    <location>
        <position position="29"/>
    </location>
</feature>
<feature type="mutagenesis site" description="Reduction of oleoyl-CoA-binding activity." evidence="7">
    <original>L</original>
    <variation>Q</variation>
    <location>
        <position position="46"/>
    </location>
</feature>
<feature type="mutagenesis site" description="Reduction of oleoyl-CoA-binding activity." evidence="7">
    <original>Y</original>
    <variation>A</variation>
    <location>
        <position position="49"/>
    </location>
</feature>
<feature type="mutagenesis site" description="Reduction of oleoyl-CoA-binding activity." evidence="7">
    <original>Q</original>
    <variation>A</variation>
    <location>
        <position position="53"/>
    </location>
</feature>
<feature type="mutagenesis site" description="Reduction of oleoyl-CoA-binding activity." evidence="7">
    <original>K</original>
    <variation>A</variation>
    <location>
        <position position="75"/>
    </location>
</feature>
<feature type="mutagenesis site" description="Reduction of oleoyl-CoA-binding activity." evidence="7">
    <original>F</original>
    <variation>A</variation>
    <location>
        <position position="94"/>
    </location>
</feature>
<gene>
    <name type="primary">ACBP5</name>
    <name type="ordered locus">At5g27630</name>
    <name type="ORF">F15A18.90</name>
</gene>
<protein>
    <recommendedName>
        <fullName>Acyl-CoA-binding domain-containing protein 5</fullName>
        <shortName>Acyl-CoA binding protein 5</shortName>
    </recommendedName>
</protein>
<evidence type="ECO:0000250" key="1"/>
<evidence type="ECO:0000250" key="2">
    <source>
        <dbReference type="UniProtKB" id="P07107"/>
    </source>
</evidence>
<evidence type="ECO:0000250" key="3">
    <source>
        <dbReference type="UniProtKB" id="Q9MA55"/>
    </source>
</evidence>
<evidence type="ECO:0000255" key="4"/>
<evidence type="ECO:0000255" key="5">
    <source>
        <dbReference type="PROSITE-ProRule" id="PRU00573"/>
    </source>
</evidence>
<evidence type="ECO:0000256" key="6">
    <source>
        <dbReference type="SAM" id="MobiDB-lite"/>
    </source>
</evidence>
<evidence type="ECO:0000269" key="7">
    <source>
    </source>
</evidence>
<evidence type="ECO:0000269" key="8">
    <source>
    </source>
</evidence>
<evidence type="ECO:0000305" key="9"/>